<accession>P41687</accession>
<keyword id="KW-0202">Cytokine</keyword>
<keyword id="KW-0963">Cytoplasm</keyword>
<keyword id="KW-0395">Inflammatory response</keyword>
<keyword id="KW-0458">Lysosome</keyword>
<keyword id="KW-0497">Mitogen</keyword>
<keyword id="KW-0666">Pyrogen</keyword>
<keyword id="KW-1185">Reference proteome</keyword>
<keyword id="KW-0964">Secreted</keyword>
<name>IL1B_FELCA</name>
<reference key="1">
    <citation type="journal article" date="1992" name="Anim. Biotechnol.">
        <title>Feline cytokines TNF alpha and IL-1 beta: PCR cloning and sequencing of cDNA.</title>
        <authorList>
            <person name="Daniel S.L."/>
            <person name="Brenner C.A."/>
            <person name="Legendre A.M."/>
            <person name="Soloman A."/>
            <person name="Rouse B.T."/>
        </authorList>
    </citation>
    <scope>NUCLEOTIDE SEQUENCE [MRNA]</scope>
    <source>
        <tissue>Bone marrow</tissue>
    </source>
</reference>
<feature type="propeptide" id="PRO_0000015297" evidence="1">
    <location>
        <begin position="1"/>
        <end position="115"/>
    </location>
</feature>
<feature type="chain" id="PRO_0000015298" description="Interleukin-1 beta">
    <location>
        <begin position="116"/>
        <end position="267"/>
    </location>
</feature>
<feature type="site" description="Important for interaction with integrin" evidence="2">
    <location>
        <position position="170"/>
    </location>
</feature>
<feature type="site" description="Important for interaction with integrin" evidence="2">
    <location>
        <position position="178"/>
    </location>
</feature>
<feature type="site" description="Important for interaction with integrin" evidence="2">
    <location>
        <position position="189"/>
    </location>
</feature>
<feature type="site" description="Important for interaction with integrin" evidence="2">
    <location>
        <position position="203"/>
    </location>
</feature>
<proteinExistence type="evidence at transcript level"/>
<evidence type="ECO:0000250" key="1"/>
<evidence type="ECO:0000250" key="2">
    <source>
        <dbReference type="UniProtKB" id="P01584"/>
    </source>
</evidence>
<evidence type="ECO:0000250" key="3">
    <source>
        <dbReference type="UniProtKB" id="P10749"/>
    </source>
</evidence>
<evidence type="ECO:0000305" key="4"/>
<sequence length="267" mass="30362">MAPVPELTSEMMAYYSDENDLFFEADGPEKMKGSLQNLSHSFLGDEGIQLQISHQPDNKSLRHAVSVIVAMEKLKKISFACSQPLQDEDLKSLFCCIFEEEPIICDTWDDGFVCDAAIQSQDYTFRDISQKSLVLSGSYELRALHLNGQNMNQQVVFRMSFVHGEENSKKIPVVLCIKKNNLYLSCVMKDGKPTLQLEMLDPKVYPKKKMEKRFVFNKTEIKGNVEFESSQFPNWYISTSQAEEMPVFLGNTKGGQDITDFIMESAS</sequence>
<comment type="function">
    <text evidence="2">Potent pro-inflammatory cytokine. Initially discovered as the major endogenous pyrogen, induces prostaglandin synthesis, neutrophil influx and activation, T-cell activation and cytokine production, B-cell activation and antibody production, and fibroblast proliferation and collagen production. Promotes Th17 differentiation of T-cells. Synergizes with IL12/interleukin-12 to induce IFNG synthesis from T-helper 1 (Th1) cells. Plays a role in angiogenesis by inducing VEGF production synergistically with TNF and IL6. Involved in transduction of inflammation downstream of pyroptosis: its mature form is specifically released in the extracellular milieu by passing through the gasdermin-D (GSDMD) pore.</text>
</comment>
<comment type="subunit">
    <text evidence="2">Monomer. In its precursor form, weakly interacts with full-length MEFV; the mature cytokine does not interact at all. Interacts with integrins ITGAV:ITGBV and ITGA5:ITGB1; integrin-binding is required for IL1B signaling. Interacts with cargo receptor TMED10; the interaction is direct and is required for the secretion of IL1B mature form. Interacts with HSP90AB1; the interaction facilitates cargo translocation into the ERGIC. Interacts with HSP90B1; the interaction facilitates cargo translocation into the ERGIC.</text>
</comment>
<comment type="subcellular location">
    <subcellularLocation>
        <location evidence="2">Cytoplasm</location>
        <location evidence="2">Cytosol</location>
    </subcellularLocation>
    <subcellularLocation>
        <location evidence="2">Secreted</location>
    </subcellularLocation>
    <subcellularLocation>
        <location evidence="2">Lysosome</location>
    </subcellularLocation>
    <subcellularLocation>
        <location evidence="3">Secreted</location>
        <location evidence="3">Extracellular exosome</location>
    </subcellularLocation>
    <text evidence="2">The precursor is cytosolic. In response to inflammasome-activating signals, such as ATP for NLRP3 inflammasome or bacterial flagellin for NLRC4 inflammasome, cleaved and secreted. Mature form is secreted and released in the extracellular milieu by passing through the gasdermin-D (GSDMD) pore. In contrast, the precursor form is not released, due to the presence of an acidic region that is proteolytically removed by CASP1 during maturation. The secretion is dependent on protein unfolding and facilitated by the cargo receptor TMED10.</text>
</comment>
<comment type="miscellaneous">
    <text evidence="1">IL1B production occurs in 2 steps, each being controlled by different stimuli. First, inflammatory signals, such as LPS, stimulate the synthesis and promote the accumulation of cytosolic stores of pro-IL1B (priming). Then additional signals are required for inflammasome assembly, leading to CASP1 activation, pro-IL1B processing and eventually secretion of the active cytokine. IL1B processing and secretion are temporarily associated.</text>
</comment>
<comment type="similarity">
    <text evidence="4">Belongs to the IL-1 family.</text>
</comment>
<gene>
    <name type="primary">IL1B</name>
</gene>
<organism>
    <name type="scientific">Felis catus</name>
    <name type="common">Cat</name>
    <name type="synonym">Felis silvestris catus</name>
    <dbReference type="NCBI Taxonomy" id="9685"/>
    <lineage>
        <taxon>Eukaryota</taxon>
        <taxon>Metazoa</taxon>
        <taxon>Chordata</taxon>
        <taxon>Craniata</taxon>
        <taxon>Vertebrata</taxon>
        <taxon>Euteleostomi</taxon>
        <taxon>Mammalia</taxon>
        <taxon>Eutheria</taxon>
        <taxon>Laurasiatheria</taxon>
        <taxon>Carnivora</taxon>
        <taxon>Feliformia</taxon>
        <taxon>Felidae</taxon>
        <taxon>Felinae</taxon>
        <taxon>Felis</taxon>
    </lineage>
</organism>
<protein>
    <recommendedName>
        <fullName>Interleukin-1 beta</fullName>
        <shortName>IL-1 beta</shortName>
    </recommendedName>
</protein>
<dbReference type="EMBL" id="M92060">
    <property type="protein sequence ID" value="AAA30814.1"/>
    <property type="molecule type" value="mRNA"/>
</dbReference>
<dbReference type="RefSeq" id="NP_001070882.1">
    <property type="nucleotide sequence ID" value="NM_001077414.1"/>
</dbReference>
<dbReference type="SMR" id="P41687"/>
<dbReference type="FunCoup" id="P41687">
    <property type="interactions" value="7"/>
</dbReference>
<dbReference type="STRING" id="9685.ENSFCAP00000005482"/>
<dbReference type="PaxDb" id="9685-ENSFCAP00000005482"/>
<dbReference type="GeneID" id="768274"/>
<dbReference type="KEGG" id="fca:768274"/>
<dbReference type="CTD" id="3553"/>
<dbReference type="eggNOG" id="ENOG502S3E9">
    <property type="taxonomic scope" value="Eukaryota"/>
</dbReference>
<dbReference type="InParanoid" id="P41687"/>
<dbReference type="OrthoDB" id="9449069at2759"/>
<dbReference type="TreeFam" id="TF300203"/>
<dbReference type="Proteomes" id="UP000011712">
    <property type="component" value="Unplaced"/>
</dbReference>
<dbReference type="GO" id="GO:0005829">
    <property type="term" value="C:cytosol"/>
    <property type="evidence" value="ECO:0007669"/>
    <property type="project" value="UniProtKB-SubCell"/>
</dbReference>
<dbReference type="GO" id="GO:0005615">
    <property type="term" value="C:extracellular space"/>
    <property type="evidence" value="ECO:0000318"/>
    <property type="project" value="GO_Central"/>
</dbReference>
<dbReference type="GO" id="GO:0005764">
    <property type="term" value="C:lysosome"/>
    <property type="evidence" value="ECO:0007669"/>
    <property type="project" value="UniProtKB-SubCell"/>
</dbReference>
<dbReference type="GO" id="GO:0005125">
    <property type="term" value="F:cytokine activity"/>
    <property type="evidence" value="ECO:0000318"/>
    <property type="project" value="GO_Central"/>
</dbReference>
<dbReference type="GO" id="GO:0005178">
    <property type="term" value="F:integrin binding"/>
    <property type="evidence" value="ECO:0000250"/>
    <property type="project" value="UniProtKB"/>
</dbReference>
<dbReference type="GO" id="GO:0005149">
    <property type="term" value="F:interleukin-1 receptor binding"/>
    <property type="evidence" value="ECO:0007669"/>
    <property type="project" value="InterPro"/>
</dbReference>
<dbReference type="GO" id="GO:0071222">
    <property type="term" value="P:cellular response to lipopolysaccharide"/>
    <property type="evidence" value="ECO:0000318"/>
    <property type="project" value="GO_Central"/>
</dbReference>
<dbReference type="GO" id="GO:0019221">
    <property type="term" value="P:cytokine-mediated signaling pathway"/>
    <property type="evidence" value="ECO:0000318"/>
    <property type="project" value="GO_Central"/>
</dbReference>
<dbReference type="GO" id="GO:0001660">
    <property type="term" value="P:fever generation"/>
    <property type="evidence" value="ECO:0007669"/>
    <property type="project" value="UniProtKB-KW"/>
</dbReference>
<dbReference type="GO" id="GO:0006955">
    <property type="term" value="P:immune response"/>
    <property type="evidence" value="ECO:0000318"/>
    <property type="project" value="GO_Central"/>
</dbReference>
<dbReference type="GO" id="GO:0006954">
    <property type="term" value="P:inflammatory response"/>
    <property type="evidence" value="ECO:0000318"/>
    <property type="project" value="GO_Central"/>
</dbReference>
<dbReference type="GO" id="GO:0043123">
    <property type="term" value="P:positive regulation of canonical NF-kappaB signal transduction"/>
    <property type="evidence" value="ECO:0000318"/>
    <property type="project" value="GO_Central"/>
</dbReference>
<dbReference type="GO" id="GO:0051781">
    <property type="term" value="P:positive regulation of cell division"/>
    <property type="evidence" value="ECO:0007669"/>
    <property type="project" value="UniProtKB-KW"/>
</dbReference>
<dbReference type="GO" id="GO:0033092">
    <property type="term" value="P:positive regulation of immature T cell proliferation in thymus"/>
    <property type="evidence" value="ECO:0000318"/>
    <property type="project" value="GO_Central"/>
</dbReference>
<dbReference type="GO" id="GO:2000556">
    <property type="term" value="P:positive regulation of T-helper 1 cell cytokine production"/>
    <property type="evidence" value="ECO:0000250"/>
    <property type="project" value="UniProtKB"/>
</dbReference>
<dbReference type="GO" id="GO:0032729">
    <property type="term" value="P:positive regulation of type II interferon production"/>
    <property type="evidence" value="ECO:0000250"/>
    <property type="project" value="UniProtKB"/>
</dbReference>
<dbReference type="GO" id="GO:0070372">
    <property type="term" value="P:regulation of ERK1 and ERK2 cascade"/>
    <property type="evidence" value="ECO:0000318"/>
    <property type="project" value="GO_Central"/>
</dbReference>
<dbReference type="GO" id="GO:0010573">
    <property type="term" value="P:vascular endothelial growth factor production"/>
    <property type="evidence" value="ECO:0000250"/>
    <property type="project" value="UniProtKB"/>
</dbReference>
<dbReference type="CDD" id="cd23296">
    <property type="entry name" value="beta-trefoil_IL1B"/>
    <property type="match status" value="1"/>
</dbReference>
<dbReference type="FunFam" id="2.80.10.50:FF:000027">
    <property type="entry name" value="Interleukin-1 beta"/>
    <property type="match status" value="1"/>
</dbReference>
<dbReference type="Gene3D" id="2.80.10.50">
    <property type="match status" value="1"/>
</dbReference>
<dbReference type="InterPro" id="IPR020877">
    <property type="entry name" value="IL-1_CS"/>
</dbReference>
<dbReference type="InterPro" id="IPR000975">
    <property type="entry name" value="IL-1_fam"/>
</dbReference>
<dbReference type="InterPro" id="IPR003502">
    <property type="entry name" value="IL-1_propep"/>
</dbReference>
<dbReference type="InterPro" id="IPR008996">
    <property type="entry name" value="IL1/FGF"/>
</dbReference>
<dbReference type="PANTHER" id="PTHR10078:SF30">
    <property type="entry name" value="INTERLEUKIN-1 BETA"/>
    <property type="match status" value="1"/>
</dbReference>
<dbReference type="PANTHER" id="PTHR10078">
    <property type="entry name" value="INTERLEUKIN-1 FAMILY MEMBER"/>
    <property type="match status" value="1"/>
</dbReference>
<dbReference type="Pfam" id="PF00340">
    <property type="entry name" value="IL1"/>
    <property type="match status" value="1"/>
</dbReference>
<dbReference type="Pfam" id="PF02394">
    <property type="entry name" value="IL1_propep"/>
    <property type="match status" value="1"/>
</dbReference>
<dbReference type="PRINTS" id="PR00262">
    <property type="entry name" value="IL1HBGF"/>
</dbReference>
<dbReference type="PRINTS" id="PR00264">
    <property type="entry name" value="INTERLEUKIN1"/>
</dbReference>
<dbReference type="PRINTS" id="PR01359">
    <property type="entry name" value="INTRLEUKIN1B"/>
</dbReference>
<dbReference type="PRINTS" id="PR01357">
    <property type="entry name" value="INTRLEUKN1AB"/>
</dbReference>
<dbReference type="SMART" id="SM00125">
    <property type="entry name" value="IL1"/>
    <property type="match status" value="1"/>
</dbReference>
<dbReference type="SUPFAM" id="SSF50353">
    <property type="entry name" value="Cytokine"/>
    <property type="match status" value="1"/>
</dbReference>
<dbReference type="PROSITE" id="PS00253">
    <property type="entry name" value="INTERLEUKIN_1"/>
    <property type="match status" value="1"/>
</dbReference>